<proteinExistence type="evidence at transcript level"/>
<organism>
    <name type="scientific">Sus scrofa</name>
    <name type="common">Pig</name>
    <dbReference type="NCBI Taxonomy" id="9823"/>
    <lineage>
        <taxon>Eukaryota</taxon>
        <taxon>Metazoa</taxon>
        <taxon>Chordata</taxon>
        <taxon>Craniata</taxon>
        <taxon>Vertebrata</taxon>
        <taxon>Euteleostomi</taxon>
        <taxon>Mammalia</taxon>
        <taxon>Eutheria</taxon>
        <taxon>Laurasiatheria</taxon>
        <taxon>Artiodactyla</taxon>
        <taxon>Suina</taxon>
        <taxon>Suidae</taxon>
        <taxon>Sus</taxon>
    </lineage>
</organism>
<evidence type="ECO:0000250" key="1">
    <source>
        <dbReference type="UniProtKB" id="P12970"/>
    </source>
</evidence>
<evidence type="ECO:0000250" key="2">
    <source>
        <dbReference type="UniProtKB" id="P62424"/>
    </source>
</evidence>
<evidence type="ECO:0000305" key="3"/>
<gene>
    <name type="primary">RPL7A</name>
</gene>
<sequence length="132" mass="14573">QTATQLLKVAHKYRPETKQEKKQRLLARAEKKAAXKGDVPTKRPPVLRAGVNTVTTLVENKKAQLVVIAHDVDPIELVVFLPALCRKMGVPYCIIKGKARLGRLVHRKTCTTVAFTQVNSEDKGALAKLVEA</sequence>
<accession>Q29375</accession>
<reference key="1">
    <citation type="journal article" date="1996" name="Mamm. Genome">
        <title>Evaluation and characterization of a porcine small intestine cDNA library: analysis of 839 clones.</title>
        <authorList>
            <person name="Winteroe A.K."/>
            <person name="Fredholm M."/>
            <person name="Davies W."/>
        </authorList>
    </citation>
    <scope>NUCLEOTIDE SEQUENCE [LARGE SCALE MRNA]</scope>
    <source>
        <tissue>Small intestine</tissue>
    </source>
</reference>
<keyword id="KW-0007">Acetylation</keyword>
<keyword id="KW-0963">Cytoplasm</keyword>
<keyword id="KW-1017">Isopeptide bond</keyword>
<keyword id="KW-1185">Reference proteome</keyword>
<keyword id="KW-0687">Ribonucleoprotein</keyword>
<keyword id="KW-0689">Ribosomal protein</keyword>
<keyword id="KW-0832">Ubl conjugation</keyword>
<name>RL7A_PIG</name>
<dbReference type="EMBL" id="F14581">
    <property type="protein sequence ID" value="CAA23136.1"/>
    <property type="molecule type" value="mRNA"/>
</dbReference>
<dbReference type="STRING" id="9823.ENSSSCP00000068317"/>
<dbReference type="PaxDb" id="9823-ENSSSCP00000028140"/>
<dbReference type="PeptideAtlas" id="Q29375"/>
<dbReference type="eggNOG" id="KOG3166">
    <property type="taxonomic scope" value="Eukaryota"/>
</dbReference>
<dbReference type="InParanoid" id="Q29375"/>
<dbReference type="Proteomes" id="UP000008227">
    <property type="component" value="Unplaced"/>
</dbReference>
<dbReference type="Proteomes" id="UP000314985">
    <property type="component" value="Unplaced"/>
</dbReference>
<dbReference type="Proteomes" id="UP000694570">
    <property type="component" value="Unplaced"/>
</dbReference>
<dbReference type="Proteomes" id="UP000694571">
    <property type="component" value="Unplaced"/>
</dbReference>
<dbReference type="Proteomes" id="UP000694720">
    <property type="component" value="Unplaced"/>
</dbReference>
<dbReference type="Proteomes" id="UP000694722">
    <property type="component" value="Unplaced"/>
</dbReference>
<dbReference type="Proteomes" id="UP000694723">
    <property type="component" value="Unplaced"/>
</dbReference>
<dbReference type="Proteomes" id="UP000694724">
    <property type="component" value="Unplaced"/>
</dbReference>
<dbReference type="Proteomes" id="UP000694725">
    <property type="component" value="Unplaced"/>
</dbReference>
<dbReference type="Proteomes" id="UP000694726">
    <property type="component" value="Unplaced"/>
</dbReference>
<dbReference type="Proteomes" id="UP000694727">
    <property type="component" value="Unplaced"/>
</dbReference>
<dbReference type="Proteomes" id="UP000694728">
    <property type="component" value="Unplaced"/>
</dbReference>
<dbReference type="GO" id="GO:0022625">
    <property type="term" value="C:cytosolic large ribosomal subunit"/>
    <property type="evidence" value="ECO:0000318"/>
    <property type="project" value="GO_Central"/>
</dbReference>
<dbReference type="GO" id="GO:0003723">
    <property type="term" value="F:RNA binding"/>
    <property type="evidence" value="ECO:0000318"/>
    <property type="project" value="GO_Central"/>
</dbReference>
<dbReference type="GO" id="GO:0000470">
    <property type="term" value="P:maturation of LSU-rRNA"/>
    <property type="evidence" value="ECO:0000318"/>
    <property type="project" value="GO_Central"/>
</dbReference>
<dbReference type="Gene3D" id="3.30.1330.30">
    <property type="match status" value="1"/>
</dbReference>
<dbReference type="InterPro" id="IPR050257">
    <property type="entry name" value="eL8/uL1-like"/>
</dbReference>
<dbReference type="InterPro" id="IPR029064">
    <property type="entry name" value="Ribosomal_eL30-like_sf"/>
</dbReference>
<dbReference type="InterPro" id="IPR004037">
    <property type="entry name" value="Ribosomal_eL8-like_CS"/>
</dbReference>
<dbReference type="InterPro" id="IPR004038">
    <property type="entry name" value="Ribosomal_eL8/eL30/eS12/Gad45"/>
</dbReference>
<dbReference type="InterPro" id="IPR018492">
    <property type="entry name" value="Ribosomal_eL8/Nhp2"/>
</dbReference>
<dbReference type="InterPro" id="IPR001921">
    <property type="entry name" value="Ribosomal_eL8_euk"/>
</dbReference>
<dbReference type="PANTHER" id="PTHR23105">
    <property type="entry name" value="RIBOSOMAL PROTEIN L7AE FAMILY MEMBER"/>
    <property type="match status" value="1"/>
</dbReference>
<dbReference type="Pfam" id="PF01248">
    <property type="entry name" value="Ribosomal_L7Ae"/>
    <property type="match status" value="1"/>
</dbReference>
<dbReference type="PRINTS" id="PR00881">
    <property type="entry name" value="L7ARS6FAMILY"/>
</dbReference>
<dbReference type="PRINTS" id="PR00882">
    <property type="entry name" value="RIBOSOMALL7A"/>
</dbReference>
<dbReference type="SUPFAM" id="SSF55315">
    <property type="entry name" value="L30e-like"/>
    <property type="match status" value="1"/>
</dbReference>
<dbReference type="PROSITE" id="PS01082">
    <property type="entry name" value="RIBOSOMAL_L7AE"/>
    <property type="match status" value="1"/>
</dbReference>
<protein>
    <recommendedName>
        <fullName evidence="3">Large ribosomal subunit protein eL8</fullName>
    </recommendedName>
    <alternativeName>
        <fullName>60S ribosomal protein L7a</fullName>
    </alternativeName>
</protein>
<feature type="chain" id="PRO_0000136749" description="Large ribosomal subunit protein eL8">
    <location>
        <begin position="1" status="less than"/>
        <end position="132" status="greater than"/>
    </location>
</feature>
<feature type="modified residue" description="N6-acetyllysine; alternate" evidence="2">
    <location>
        <position position="8"/>
    </location>
</feature>
<feature type="modified residue" description="N6-acetyllysine" evidence="2">
    <location>
        <position position="128"/>
    </location>
</feature>
<feature type="cross-link" description="Glycyl lysine isopeptide (Lys-Gly) (interchain with G-Cter in SUMO2); alternate" evidence="2">
    <location>
        <position position="8"/>
    </location>
</feature>
<feature type="cross-link" description="Glycyl lysine isopeptide (Lys-Gly) (interchain with G-Cter in SUMO2)" evidence="2">
    <location>
        <position position="36"/>
    </location>
</feature>
<feature type="non-terminal residue">
    <location>
        <position position="1"/>
    </location>
</feature>
<feature type="non-terminal residue">
    <location>
        <position position="132"/>
    </location>
</feature>
<comment type="function">
    <text evidence="2">Component of the large ribosomal subunit. The ribosome is a large ribonucleoprotein complex responsible for the synthesis of proteins in the cell.</text>
</comment>
<comment type="subunit">
    <text evidence="1 2">Component of the large ribosomal subunit (By similarity). Interacts with CRY1 (By similarity). Interacts with DICER1, AGO2, TARBP2, MOV10 and EIF6; they form a large RNA-induced silencing complex (RISC) (By similarity).</text>
</comment>
<comment type="subcellular location">
    <subcellularLocation>
        <location evidence="2">Cytoplasm</location>
    </subcellularLocation>
</comment>
<comment type="similarity">
    <text evidence="3">Belongs to the eukaryotic ribosomal protein eL8 family.</text>
</comment>